<accession>Q3UV70</accession>
<name>PDP1_MOUSE</name>
<organism>
    <name type="scientific">Mus musculus</name>
    <name type="common">Mouse</name>
    <dbReference type="NCBI Taxonomy" id="10090"/>
    <lineage>
        <taxon>Eukaryota</taxon>
        <taxon>Metazoa</taxon>
        <taxon>Chordata</taxon>
        <taxon>Craniata</taxon>
        <taxon>Vertebrata</taxon>
        <taxon>Euteleostomi</taxon>
        <taxon>Mammalia</taxon>
        <taxon>Eutheria</taxon>
        <taxon>Euarchontoglires</taxon>
        <taxon>Glires</taxon>
        <taxon>Rodentia</taxon>
        <taxon>Myomorpha</taxon>
        <taxon>Muroidea</taxon>
        <taxon>Muridae</taxon>
        <taxon>Murinae</taxon>
        <taxon>Mus</taxon>
        <taxon>Mus</taxon>
    </lineage>
</organism>
<gene>
    <name type="primary">Pdp1</name>
    <name type="synonym">Ppm2c</name>
</gene>
<sequence length="538" mass="61180">MPAPTQLFFPLVRNCELSRIYGTACYCHHKHLCCSPPYIPQNRLRYTPHPAYATFCRPRENWWQYTQGRRYASTPQKFYLTPPQVNSILKANEYSFKVPEFDGKNVSSILGFDSNQLPANAPIEDRRSAATCLQTRGMLLGVFDGHAGCACSQAVSERLFYYIAVSLLPHETLLEIENAVESGRALLPILQWHKHPNDYFSKEASKLYFNSLRTYWQELIDLNTGESADIDVKEALINAFKRLDNDISLEAQVGDPNSFLNYLVLRVAFSGATACVAHVDGVDLHVANTGDSRAMLGVQEEDGSWSAVTLSNDHNAQNERELERLKLEHPKNEAKSVVKQDRLLGLLMPFRAFGDVKFKWSIDLQKRVIESGPDQLNDNEYTKFIPPNYHTPPYLTAEPEVTYHRLRPQDKFLVLATDGLWETMHRQDVVRIVGEYLTGMHHQQPIAVGGYKVTLGQMHGLLTERRAKMSSVFEDQNAATHLIRHAVGNNEFGAVDHERLSKMLSLPEELARMYRDDITIIVVQFNSHVVGAYQNQEQ</sequence>
<dbReference type="EC" id="3.1.3.43" evidence="2"/>
<dbReference type="EMBL" id="AK137550">
    <property type="protein sequence ID" value="BAE23403.1"/>
    <property type="molecule type" value="mRNA"/>
</dbReference>
<dbReference type="CCDS" id="CCDS38694.1"/>
<dbReference type="CCDS" id="CCDS71345.1"/>
<dbReference type="RefSeq" id="NP_001028625.1">
    <property type="nucleotide sequence ID" value="NM_001033453.4"/>
</dbReference>
<dbReference type="RefSeq" id="NP_001091700.1">
    <property type="nucleotide sequence ID" value="NM_001098230.1"/>
</dbReference>
<dbReference type="RefSeq" id="NP_001091701.1">
    <property type="nucleotide sequence ID" value="NM_001098231.1"/>
</dbReference>
<dbReference type="RefSeq" id="NP_001277316.2">
    <property type="nucleotide sequence ID" value="NM_001290387.2"/>
</dbReference>
<dbReference type="RefSeq" id="NP_001277320.1">
    <property type="nucleotide sequence ID" value="NM_001290391.1"/>
</dbReference>
<dbReference type="SMR" id="Q3UV70"/>
<dbReference type="BioGRID" id="237972">
    <property type="interactions" value="6"/>
</dbReference>
<dbReference type="FunCoup" id="Q3UV70">
    <property type="interactions" value="2728"/>
</dbReference>
<dbReference type="IntAct" id="Q3UV70">
    <property type="interactions" value="1"/>
</dbReference>
<dbReference type="STRING" id="10090.ENSMUSP00000103937"/>
<dbReference type="GlyGen" id="Q3UV70">
    <property type="glycosylation" value="3 sites, 1 N-linked glycan (1 site)"/>
</dbReference>
<dbReference type="iPTMnet" id="Q3UV70"/>
<dbReference type="PhosphoSitePlus" id="Q3UV70"/>
<dbReference type="SwissPalm" id="Q3UV70"/>
<dbReference type="jPOST" id="Q3UV70"/>
<dbReference type="PaxDb" id="10090-ENSMUSP00000103934"/>
<dbReference type="ProteomicsDB" id="288090"/>
<dbReference type="Pumba" id="Q3UV70"/>
<dbReference type="Antibodypedia" id="12838">
    <property type="antibodies" value="277 antibodies from 33 providers"/>
</dbReference>
<dbReference type="DNASU" id="381511"/>
<dbReference type="Ensembl" id="ENSMUST00000108297.3">
    <property type="protein sequence ID" value="ENSMUSP00000103932.3"/>
    <property type="gene ID" value="ENSMUSG00000049225.16"/>
</dbReference>
<dbReference type="GeneID" id="381511"/>
<dbReference type="KEGG" id="mmu:381511"/>
<dbReference type="UCSC" id="uc008sab.2">
    <property type="organism name" value="mouse"/>
</dbReference>
<dbReference type="AGR" id="MGI:2685870"/>
<dbReference type="CTD" id="54704"/>
<dbReference type="MGI" id="MGI:2685870">
    <property type="gene designation" value="Pdp1"/>
</dbReference>
<dbReference type="VEuPathDB" id="HostDB:ENSMUSG00000049225"/>
<dbReference type="eggNOG" id="KOG0700">
    <property type="taxonomic scope" value="Eukaryota"/>
</dbReference>
<dbReference type="GeneTree" id="ENSGT00940000156368"/>
<dbReference type="HOGENOM" id="CLU_021928_0_0_1"/>
<dbReference type="InParanoid" id="Q3UV70"/>
<dbReference type="OMA" id="DVRTPPY"/>
<dbReference type="OrthoDB" id="6422at9989"/>
<dbReference type="PhylomeDB" id="Q3UV70"/>
<dbReference type="Reactome" id="R-MMU-204174">
    <property type="pathway name" value="Regulation of pyruvate dehydrogenase (PDH) complex"/>
</dbReference>
<dbReference type="BioGRID-ORCS" id="381511">
    <property type="hits" value="1 hit in 80 CRISPR screens"/>
</dbReference>
<dbReference type="ChiTaRS" id="Pdp1">
    <property type="organism name" value="mouse"/>
</dbReference>
<dbReference type="PRO" id="PR:Q3UV70"/>
<dbReference type="Proteomes" id="UP000000589">
    <property type="component" value="Chromosome 4"/>
</dbReference>
<dbReference type="RNAct" id="Q3UV70">
    <property type="molecule type" value="protein"/>
</dbReference>
<dbReference type="Bgee" id="ENSMUSG00000049225">
    <property type="expression patterns" value="Expressed in lateral geniculate body and 222 other cell types or tissues"/>
</dbReference>
<dbReference type="ExpressionAtlas" id="Q3UV70">
    <property type="expression patterns" value="baseline and differential"/>
</dbReference>
<dbReference type="GO" id="GO:0005739">
    <property type="term" value="C:mitochondrion"/>
    <property type="evidence" value="ECO:0007005"/>
    <property type="project" value="MGI"/>
</dbReference>
<dbReference type="GO" id="GO:0004741">
    <property type="term" value="F:[pyruvate dehydrogenase (acetyl-transferring)]-phosphatase activity"/>
    <property type="evidence" value="ECO:0000250"/>
    <property type="project" value="UniProtKB"/>
</dbReference>
<dbReference type="GO" id="GO:0005509">
    <property type="term" value="F:calcium ion binding"/>
    <property type="evidence" value="ECO:0000250"/>
    <property type="project" value="UniProtKB"/>
</dbReference>
<dbReference type="CDD" id="cd00143">
    <property type="entry name" value="PP2Cc"/>
    <property type="match status" value="1"/>
</dbReference>
<dbReference type="Gene3D" id="3.60.40.10">
    <property type="entry name" value="PPM-type phosphatase domain"/>
    <property type="match status" value="1"/>
</dbReference>
<dbReference type="InterPro" id="IPR015655">
    <property type="entry name" value="PP2C"/>
</dbReference>
<dbReference type="InterPro" id="IPR000222">
    <property type="entry name" value="PP2C_BS"/>
</dbReference>
<dbReference type="InterPro" id="IPR036457">
    <property type="entry name" value="PPM-type-like_dom_sf"/>
</dbReference>
<dbReference type="InterPro" id="IPR001932">
    <property type="entry name" value="PPM-type_phosphatase-like_dom"/>
</dbReference>
<dbReference type="PANTHER" id="PTHR13832:SF627">
    <property type="entry name" value="[PYRUVATE DEHYDROGENASE [ACETYL-TRANSFERRING]]-PHOSPHATASE 1, MITOCHONDRIAL"/>
    <property type="match status" value="1"/>
</dbReference>
<dbReference type="PANTHER" id="PTHR13832">
    <property type="entry name" value="PROTEIN PHOSPHATASE 2C"/>
    <property type="match status" value="1"/>
</dbReference>
<dbReference type="Pfam" id="PF00481">
    <property type="entry name" value="PP2C"/>
    <property type="match status" value="1"/>
</dbReference>
<dbReference type="SMART" id="SM00332">
    <property type="entry name" value="PP2Cc"/>
    <property type="match status" value="1"/>
</dbReference>
<dbReference type="SUPFAM" id="SSF81606">
    <property type="entry name" value="PP2C-like"/>
    <property type="match status" value="1"/>
</dbReference>
<dbReference type="PROSITE" id="PS01032">
    <property type="entry name" value="PPM_1"/>
    <property type="match status" value="1"/>
</dbReference>
<dbReference type="PROSITE" id="PS51746">
    <property type="entry name" value="PPM_2"/>
    <property type="match status" value="1"/>
</dbReference>
<feature type="transit peptide" description="Mitochondrion" evidence="2">
    <location>
        <begin position="1"/>
        <end position="71"/>
    </location>
</feature>
<feature type="chain" id="PRO_0000045808" description="[Pyruvate dehydrogenase [acetyl-transferring]]-phosphatase 1, mitochondrial">
    <location>
        <begin position="72"/>
        <end position="538"/>
    </location>
</feature>
<feature type="domain" description="PPM-type phosphatase" evidence="4">
    <location>
        <begin position="109"/>
        <end position="525"/>
    </location>
</feature>
<feature type="binding site" evidence="2">
    <location>
        <position position="144"/>
    </location>
    <ligand>
        <name>Mn(2+)</name>
        <dbReference type="ChEBI" id="CHEBI:29035"/>
        <label>1</label>
    </ligand>
</feature>
<feature type="binding site" evidence="2">
    <location>
        <position position="144"/>
    </location>
    <ligand>
        <name>Mn(2+)</name>
        <dbReference type="ChEBI" id="CHEBI:29035"/>
        <label>2</label>
    </ligand>
</feature>
<feature type="binding site" evidence="2">
    <location>
        <position position="145"/>
    </location>
    <ligand>
        <name>Mn(2+)</name>
        <dbReference type="ChEBI" id="CHEBI:29035"/>
        <label>1</label>
    </ligand>
</feature>
<feature type="binding site" evidence="2">
    <location>
        <position position="418"/>
    </location>
    <ligand>
        <name>Mn(2+)</name>
        <dbReference type="ChEBI" id="CHEBI:29035"/>
        <label>2</label>
    </ligand>
</feature>
<feature type="binding site" evidence="2">
    <location>
        <position position="516"/>
    </location>
    <ligand>
        <name>Mn(2+)</name>
        <dbReference type="ChEBI" id="CHEBI:29035"/>
        <label>2</label>
    </ligand>
</feature>
<feature type="modified residue" description="N6-acetyllysine" evidence="3">
    <location>
        <position position="202"/>
    </location>
</feature>
<reference key="1">
    <citation type="journal article" date="2005" name="Science">
        <title>The transcriptional landscape of the mammalian genome.</title>
        <authorList>
            <person name="Carninci P."/>
            <person name="Kasukawa T."/>
            <person name="Katayama S."/>
            <person name="Gough J."/>
            <person name="Frith M.C."/>
            <person name="Maeda N."/>
            <person name="Oyama R."/>
            <person name="Ravasi T."/>
            <person name="Lenhard B."/>
            <person name="Wells C."/>
            <person name="Kodzius R."/>
            <person name="Shimokawa K."/>
            <person name="Bajic V.B."/>
            <person name="Brenner S.E."/>
            <person name="Batalov S."/>
            <person name="Forrest A.R."/>
            <person name="Zavolan M."/>
            <person name="Davis M.J."/>
            <person name="Wilming L.G."/>
            <person name="Aidinis V."/>
            <person name="Allen J.E."/>
            <person name="Ambesi-Impiombato A."/>
            <person name="Apweiler R."/>
            <person name="Aturaliya R.N."/>
            <person name="Bailey T.L."/>
            <person name="Bansal M."/>
            <person name="Baxter L."/>
            <person name="Beisel K.W."/>
            <person name="Bersano T."/>
            <person name="Bono H."/>
            <person name="Chalk A.M."/>
            <person name="Chiu K.P."/>
            <person name="Choudhary V."/>
            <person name="Christoffels A."/>
            <person name="Clutterbuck D.R."/>
            <person name="Crowe M.L."/>
            <person name="Dalla E."/>
            <person name="Dalrymple B.P."/>
            <person name="de Bono B."/>
            <person name="Della Gatta G."/>
            <person name="di Bernardo D."/>
            <person name="Down T."/>
            <person name="Engstrom P."/>
            <person name="Fagiolini M."/>
            <person name="Faulkner G."/>
            <person name="Fletcher C.F."/>
            <person name="Fukushima T."/>
            <person name="Furuno M."/>
            <person name="Futaki S."/>
            <person name="Gariboldi M."/>
            <person name="Georgii-Hemming P."/>
            <person name="Gingeras T.R."/>
            <person name="Gojobori T."/>
            <person name="Green R.E."/>
            <person name="Gustincich S."/>
            <person name="Harbers M."/>
            <person name="Hayashi Y."/>
            <person name="Hensch T.K."/>
            <person name="Hirokawa N."/>
            <person name="Hill D."/>
            <person name="Huminiecki L."/>
            <person name="Iacono M."/>
            <person name="Ikeo K."/>
            <person name="Iwama A."/>
            <person name="Ishikawa T."/>
            <person name="Jakt M."/>
            <person name="Kanapin A."/>
            <person name="Katoh M."/>
            <person name="Kawasawa Y."/>
            <person name="Kelso J."/>
            <person name="Kitamura H."/>
            <person name="Kitano H."/>
            <person name="Kollias G."/>
            <person name="Krishnan S.P."/>
            <person name="Kruger A."/>
            <person name="Kummerfeld S.K."/>
            <person name="Kurochkin I.V."/>
            <person name="Lareau L.F."/>
            <person name="Lazarevic D."/>
            <person name="Lipovich L."/>
            <person name="Liu J."/>
            <person name="Liuni S."/>
            <person name="McWilliam S."/>
            <person name="Madan Babu M."/>
            <person name="Madera M."/>
            <person name="Marchionni L."/>
            <person name="Matsuda H."/>
            <person name="Matsuzawa S."/>
            <person name="Miki H."/>
            <person name="Mignone F."/>
            <person name="Miyake S."/>
            <person name="Morris K."/>
            <person name="Mottagui-Tabar S."/>
            <person name="Mulder N."/>
            <person name="Nakano N."/>
            <person name="Nakauchi H."/>
            <person name="Ng P."/>
            <person name="Nilsson R."/>
            <person name="Nishiguchi S."/>
            <person name="Nishikawa S."/>
            <person name="Nori F."/>
            <person name="Ohara O."/>
            <person name="Okazaki Y."/>
            <person name="Orlando V."/>
            <person name="Pang K.C."/>
            <person name="Pavan W.J."/>
            <person name="Pavesi G."/>
            <person name="Pesole G."/>
            <person name="Petrovsky N."/>
            <person name="Piazza S."/>
            <person name="Reed J."/>
            <person name="Reid J.F."/>
            <person name="Ring B.Z."/>
            <person name="Ringwald M."/>
            <person name="Rost B."/>
            <person name="Ruan Y."/>
            <person name="Salzberg S.L."/>
            <person name="Sandelin A."/>
            <person name="Schneider C."/>
            <person name="Schoenbach C."/>
            <person name="Sekiguchi K."/>
            <person name="Semple C.A."/>
            <person name="Seno S."/>
            <person name="Sessa L."/>
            <person name="Sheng Y."/>
            <person name="Shibata Y."/>
            <person name="Shimada H."/>
            <person name="Shimada K."/>
            <person name="Silva D."/>
            <person name="Sinclair B."/>
            <person name="Sperling S."/>
            <person name="Stupka E."/>
            <person name="Sugiura K."/>
            <person name="Sultana R."/>
            <person name="Takenaka Y."/>
            <person name="Taki K."/>
            <person name="Tammoja K."/>
            <person name="Tan S.L."/>
            <person name="Tang S."/>
            <person name="Taylor M.S."/>
            <person name="Tegner J."/>
            <person name="Teichmann S.A."/>
            <person name="Ueda H.R."/>
            <person name="van Nimwegen E."/>
            <person name="Verardo R."/>
            <person name="Wei C.L."/>
            <person name="Yagi K."/>
            <person name="Yamanishi H."/>
            <person name="Zabarovsky E."/>
            <person name="Zhu S."/>
            <person name="Zimmer A."/>
            <person name="Hide W."/>
            <person name="Bult C."/>
            <person name="Grimmond S.M."/>
            <person name="Teasdale R.D."/>
            <person name="Liu E.T."/>
            <person name="Brusic V."/>
            <person name="Quackenbush J."/>
            <person name="Wahlestedt C."/>
            <person name="Mattick J.S."/>
            <person name="Hume D.A."/>
            <person name="Kai C."/>
            <person name="Sasaki D."/>
            <person name="Tomaru Y."/>
            <person name="Fukuda S."/>
            <person name="Kanamori-Katayama M."/>
            <person name="Suzuki M."/>
            <person name="Aoki J."/>
            <person name="Arakawa T."/>
            <person name="Iida J."/>
            <person name="Imamura K."/>
            <person name="Itoh M."/>
            <person name="Kato T."/>
            <person name="Kawaji H."/>
            <person name="Kawagashira N."/>
            <person name="Kawashima T."/>
            <person name="Kojima M."/>
            <person name="Kondo S."/>
            <person name="Konno H."/>
            <person name="Nakano K."/>
            <person name="Ninomiya N."/>
            <person name="Nishio T."/>
            <person name="Okada M."/>
            <person name="Plessy C."/>
            <person name="Shibata K."/>
            <person name="Shiraki T."/>
            <person name="Suzuki S."/>
            <person name="Tagami M."/>
            <person name="Waki K."/>
            <person name="Watahiki A."/>
            <person name="Okamura-Oho Y."/>
            <person name="Suzuki H."/>
            <person name="Kawai J."/>
            <person name="Hayashizaki Y."/>
        </authorList>
    </citation>
    <scope>NUCLEOTIDE SEQUENCE [LARGE SCALE MRNA]</scope>
    <source>
        <strain>C57BL/6J</strain>
        <tissue>Bone</tissue>
    </source>
</reference>
<reference key="2">
    <citation type="journal article" date="2010" name="Cell">
        <title>A tissue-specific atlas of mouse protein phosphorylation and expression.</title>
        <authorList>
            <person name="Huttlin E.L."/>
            <person name="Jedrychowski M.P."/>
            <person name="Elias J.E."/>
            <person name="Goswami T."/>
            <person name="Rad R."/>
            <person name="Beausoleil S.A."/>
            <person name="Villen J."/>
            <person name="Haas W."/>
            <person name="Sowa M.E."/>
            <person name="Gygi S.P."/>
        </authorList>
    </citation>
    <scope>IDENTIFICATION BY MASS SPECTROMETRY [LARGE SCALE ANALYSIS]</scope>
    <source>
        <tissue>Brain</tissue>
        <tissue>Brown adipose tissue</tissue>
        <tissue>Heart</tissue>
        <tissue>Lung</tissue>
        <tissue>Testis</tissue>
    </source>
</reference>
<protein>
    <recommendedName>
        <fullName>[Pyruvate dehydrogenase [acetyl-transferring]]-phosphatase 1, mitochondrial</fullName>
        <shortName>PDP 1</shortName>
        <ecNumber evidence="2">3.1.3.43</ecNumber>
    </recommendedName>
    <alternativeName>
        <fullName>Protein phosphatase 2C</fullName>
    </alternativeName>
    <alternativeName>
        <fullName>Pyruvate dehydrogenase phosphatase catalytic subunit 1</fullName>
        <shortName>PDPC 1</shortName>
    </alternativeName>
</protein>
<proteinExistence type="evidence at protein level"/>
<comment type="function">
    <text evidence="2">Mitochondrial enzyme that catalyzes the dephosphorylation and concomitant reactivation of the alpha subunit of the E1 component of the pyruvate dehydrogenase complex (PDC), thereby stimulating the conversion of pyruvate into acetyl-CoA.</text>
</comment>
<comment type="catalytic activity">
    <reaction evidence="2">
        <text>O-phospho-L-seryl-[pyruvate dehydrogenase E1 alpha subunit] + H2O = L-seryl-[pyruvate dehydrogenase E1 alpha subunit] + phosphate</text>
        <dbReference type="Rhea" id="RHEA:12669"/>
        <dbReference type="Rhea" id="RHEA-COMP:13689"/>
        <dbReference type="Rhea" id="RHEA-COMP:13690"/>
        <dbReference type="ChEBI" id="CHEBI:15377"/>
        <dbReference type="ChEBI" id="CHEBI:29999"/>
        <dbReference type="ChEBI" id="CHEBI:43474"/>
        <dbReference type="ChEBI" id="CHEBI:83421"/>
        <dbReference type="EC" id="3.1.3.43"/>
    </reaction>
    <physiologicalReaction direction="left-to-right" evidence="2">
        <dbReference type="Rhea" id="RHEA:12670"/>
    </physiologicalReaction>
</comment>
<comment type="cofactor">
    <cofactor evidence="2">
        <name>Mn(2+)</name>
        <dbReference type="ChEBI" id="CHEBI:29035"/>
    </cofactor>
    <cofactor evidence="1">
        <name>Mg(2+)</name>
        <dbReference type="ChEBI" id="CHEBI:18420"/>
    </cofactor>
    <text evidence="1 2">Binds 2 Mn(2+) ions per subunit (By similarity). Binds 2 Mg(2+) ions per subunit (By similarity). Mn(2+) can substitute Mg2(+) for catalytic activity (By similarity).</text>
</comment>
<comment type="activity regulation">
    <text evidence="2 3">Magnesium-dependent and calcium-stimulated (By similarity). PDP1 activity strongly depends on its Ca(2+)-dependent binding to the lipoyl domain of E2 subunit of component of the pyruvate dehydrogenase complex (By similarity).</text>
</comment>
<comment type="subunit">
    <text evidence="2">Heterodimer of a catalytic (PDP1) and a regulatory (PDPR) subunit.</text>
</comment>
<comment type="subcellular location">
    <subcellularLocation>
        <location evidence="2">Mitochondrion</location>
    </subcellularLocation>
</comment>
<comment type="similarity">
    <text evidence="5">Belongs to the PP2C family.</text>
</comment>
<keyword id="KW-0007">Acetylation</keyword>
<keyword id="KW-0106">Calcium</keyword>
<keyword id="KW-0378">Hydrolase</keyword>
<keyword id="KW-0460">Magnesium</keyword>
<keyword id="KW-0464">Manganese</keyword>
<keyword id="KW-0479">Metal-binding</keyword>
<keyword id="KW-0496">Mitochondrion</keyword>
<keyword id="KW-0904">Protein phosphatase</keyword>
<keyword id="KW-1185">Reference proteome</keyword>
<keyword id="KW-0809">Transit peptide</keyword>
<evidence type="ECO:0000250" key="1">
    <source>
        <dbReference type="UniProtKB" id="O88483"/>
    </source>
</evidence>
<evidence type="ECO:0000250" key="2">
    <source>
        <dbReference type="UniProtKB" id="P35816"/>
    </source>
</evidence>
<evidence type="ECO:0000250" key="3">
    <source>
        <dbReference type="UniProtKB" id="Q9P0J1"/>
    </source>
</evidence>
<evidence type="ECO:0000255" key="4">
    <source>
        <dbReference type="PROSITE-ProRule" id="PRU01082"/>
    </source>
</evidence>
<evidence type="ECO:0000305" key="5"/>